<name>MFS12_MOUSE</name>
<reference key="1">
    <citation type="journal article" date="2005" name="Science">
        <title>The transcriptional landscape of the mammalian genome.</title>
        <authorList>
            <person name="Carninci P."/>
            <person name="Kasukawa T."/>
            <person name="Katayama S."/>
            <person name="Gough J."/>
            <person name="Frith M.C."/>
            <person name="Maeda N."/>
            <person name="Oyama R."/>
            <person name="Ravasi T."/>
            <person name="Lenhard B."/>
            <person name="Wells C."/>
            <person name="Kodzius R."/>
            <person name="Shimokawa K."/>
            <person name="Bajic V.B."/>
            <person name="Brenner S.E."/>
            <person name="Batalov S."/>
            <person name="Forrest A.R."/>
            <person name="Zavolan M."/>
            <person name="Davis M.J."/>
            <person name="Wilming L.G."/>
            <person name="Aidinis V."/>
            <person name="Allen J.E."/>
            <person name="Ambesi-Impiombato A."/>
            <person name="Apweiler R."/>
            <person name="Aturaliya R.N."/>
            <person name="Bailey T.L."/>
            <person name="Bansal M."/>
            <person name="Baxter L."/>
            <person name="Beisel K.W."/>
            <person name="Bersano T."/>
            <person name="Bono H."/>
            <person name="Chalk A.M."/>
            <person name="Chiu K.P."/>
            <person name="Choudhary V."/>
            <person name="Christoffels A."/>
            <person name="Clutterbuck D.R."/>
            <person name="Crowe M.L."/>
            <person name="Dalla E."/>
            <person name="Dalrymple B.P."/>
            <person name="de Bono B."/>
            <person name="Della Gatta G."/>
            <person name="di Bernardo D."/>
            <person name="Down T."/>
            <person name="Engstrom P."/>
            <person name="Fagiolini M."/>
            <person name="Faulkner G."/>
            <person name="Fletcher C.F."/>
            <person name="Fukushima T."/>
            <person name="Furuno M."/>
            <person name="Futaki S."/>
            <person name="Gariboldi M."/>
            <person name="Georgii-Hemming P."/>
            <person name="Gingeras T.R."/>
            <person name="Gojobori T."/>
            <person name="Green R.E."/>
            <person name="Gustincich S."/>
            <person name="Harbers M."/>
            <person name="Hayashi Y."/>
            <person name="Hensch T.K."/>
            <person name="Hirokawa N."/>
            <person name="Hill D."/>
            <person name="Huminiecki L."/>
            <person name="Iacono M."/>
            <person name="Ikeo K."/>
            <person name="Iwama A."/>
            <person name="Ishikawa T."/>
            <person name="Jakt M."/>
            <person name="Kanapin A."/>
            <person name="Katoh M."/>
            <person name="Kawasawa Y."/>
            <person name="Kelso J."/>
            <person name="Kitamura H."/>
            <person name="Kitano H."/>
            <person name="Kollias G."/>
            <person name="Krishnan S.P."/>
            <person name="Kruger A."/>
            <person name="Kummerfeld S.K."/>
            <person name="Kurochkin I.V."/>
            <person name="Lareau L.F."/>
            <person name="Lazarevic D."/>
            <person name="Lipovich L."/>
            <person name="Liu J."/>
            <person name="Liuni S."/>
            <person name="McWilliam S."/>
            <person name="Madan Babu M."/>
            <person name="Madera M."/>
            <person name="Marchionni L."/>
            <person name="Matsuda H."/>
            <person name="Matsuzawa S."/>
            <person name="Miki H."/>
            <person name="Mignone F."/>
            <person name="Miyake S."/>
            <person name="Morris K."/>
            <person name="Mottagui-Tabar S."/>
            <person name="Mulder N."/>
            <person name="Nakano N."/>
            <person name="Nakauchi H."/>
            <person name="Ng P."/>
            <person name="Nilsson R."/>
            <person name="Nishiguchi S."/>
            <person name="Nishikawa S."/>
            <person name="Nori F."/>
            <person name="Ohara O."/>
            <person name="Okazaki Y."/>
            <person name="Orlando V."/>
            <person name="Pang K.C."/>
            <person name="Pavan W.J."/>
            <person name="Pavesi G."/>
            <person name="Pesole G."/>
            <person name="Petrovsky N."/>
            <person name="Piazza S."/>
            <person name="Reed J."/>
            <person name="Reid J.F."/>
            <person name="Ring B.Z."/>
            <person name="Ringwald M."/>
            <person name="Rost B."/>
            <person name="Ruan Y."/>
            <person name="Salzberg S.L."/>
            <person name="Sandelin A."/>
            <person name="Schneider C."/>
            <person name="Schoenbach C."/>
            <person name="Sekiguchi K."/>
            <person name="Semple C.A."/>
            <person name="Seno S."/>
            <person name="Sessa L."/>
            <person name="Sheng Y."/>
            <person name="Shibata Y."/>
            <person name="Shimada H."/>
            <person name="Shimada K."/>
            <person name="Silva D."/>
            <person name="Sinclair B."/>
            <person name="Sperling S."/>
            <person name="Stupka E."/>
            <person name="Sugiura K."/>
            <person name="Sultana R."/>
            <person name="Takenaka Y."/>
            <person name="Taki K."/>
            <person name="Tammoja K."/>
            <person name="Tan S.L."/>
            <person name="Tang S."/>
            <person name="Taylor M.S."/>
            <person name="Tegner J."/>
            <person name="Teichmann S.A."/>
            <person name="Ueda H.R."/>
            <person name="van Nimwegen E."/>
            <person name="Verardo R."/>
            <person name="Wei C.L."/>
            <person name="Yagi K."/>
            <person name="Yamanishi H."/>
            <person name="Zabarovsky E."/>
            <person name="Zhu S."/>
            <person name="Zimmer A."/>
            <person name="Hide W."/>
            <person name="Bult C."/>
            <person name="Grimmond S.M."/>
            <person name="Teasdale R.D."/>
            <person name="Liu E.T."/>
            <person name="Brusic V."/>
            <person name="Quackenbush J."/>
            <person name="Wahlestedt C."/>
            <person name="Mattick J.S."/>
            <person name="Hume D.A."/>
            <person name="Kai C."/>
            <person name="Sasaki D."/>
            <person name="Tomaru Y."/>
            <person name="Fukuda S."/>
            <person name="Kanamori-Katayama M."/>
            <person name="Suzuki M."/>
            <person name="Aoki J."/>
            <person name="Arakawa T."/>
            <person name="Iida J."/>
            <person name="Imamura K."/>
            <person name="Itoh M."/>
            <person name="Kato T."/>
            <person name="Kawaji H."/>
            <person name="Kawagashira N."/>
            <person name="Kawashima T."/>
            <person name="Kojima M."/>
            <person name="Kondo S."/>
            <person name="Konno H."/>
            <person name="Nakano K."/>
            <person name="Ninomiya N."/>
            <person name="Nishio T."/>
            <person name="Okada M."/>
            <person name="Plessy C."/>
            <person name="Shibata K."/>
            <person name="Shiraki T."/>
            <person name="Suzuki S."/>
            <person name="Tagami M."/>
            <person name="Waki K."/>
            <person name="Watahiki A."/>
            <person name="Okamura-Oho Y."/>
            <person name="Suzuki H."/>
            <person name="Kawai J."/>
            <person name="Hayashizaki Y."/>
        </authorList>
    </citation>
    <scope>NUCLEOTIDE SEQUENCE [LARGE SCALE MRNA]</scope>
    <source>
        <strain>C57BL/6J</strain>
        <strain>NOD</strain>
        <tissue>Bone marrow</tissue>
    </source>
</reference>
<reference key="2">
    <citation type="journal article" date="2004" name="Genome Res.">
        <title>The status, quality, and expansion of the NIH full-length cDNA project: the Mammalian Gene Collection (MGC).</title>
        <authorList>
            <consortium name="The MGC Project Team"/>
        </authorList>
    </citation>
    <scope>NUCLEOTIDE SEQUENCE [LARGE SCALE MRNA]</scope>
</reference>
<reference key="3">
    <citation type="journal article" date="2009" name="Immunity">
        <title>The phagosomal proteome in interferon-gamma-activated macrophages.</title>
        <authorList>
            <person name="Trost M."/>
            <person name="English L."/>
            <person name="Lemieux S."/>
            <person name="Courcelles M."/>
            <person name="Desjardins M."/>
            <person name="Thibault P."/>
        </authorList>
    </citation>
    <scope>IDENTIFICATION BY MASS SPECTROMETRY [LARGE SCALE ANALYSIS]</scope>
</reference>
<reference key="4">
    <citation type="journal article" date="2017" name="Science">
        <title>Loci associated with skin pigmentation identified in African populations.</title>
        <authorList>
            <consortium name="NISC Comparative Sequencing Program"/>
            <person name="Crawford N.G."/>
            <person name="Kelly D.E."/>
            <person name="Hansen M.E.B."/>
            <person name="Beltrame M.H."/>
            <person name="Fan S."/>
            <person name="Bowman S.L."/>
            <person name="Jewett E."/>
            <person name="Ranciaro A."/>
            <person name="Thompson S."/>
            <person name="Lo Y."/>
            <person name="Pfeifer S.P."/>
            <person name="Jensen J.D."/>
            <person name="Campbell M.C."/>
            <person name="Beggs W."/>
            <person name="Hormozdiari F."/>
            <person name="Mpoloka S.W."/>
            <person name="Mokone G.G."/>
            <person name="Nyambo T."/>
            <person name="Meskel D.W."/>
            <person name="Belay G."/>
            <person name="Haut J."/>
            <person name="Rothschild H."/>
            <person name="Zon L."/>
            <person name="Zhou Y."/>
            <person name="Kovacs M.A."/>
            <person name="Xu M."/>
            <person name="Zhang T."/>
            <person name="Bishop K."/>
            <person name="Sinclair J."/>
            <person name="Rivas C."/>
            <person name="Elliot E."/>
            <person name="Choi J."/>
            <person name="Li S.A."/>
            <person name="Hicks B."/>
            <person name="Burgess S."/>
            <person name="Abnet C."/>
            <person name="Watkins-Chow D.E."/>
            <person name="Oceana E."/>
            <person name="Song Y.S."/>
            <person name="Eskin E."/>
            <person name="Brown K.M."/>
            <person name="Marks M.S."/>
            <person name="Loftus S.K."/>
            <person name="Pavan W.J."/>
            <person name="Yeager M."/>
            <person name="Chanock S."/>
            <person name="Tishkoff S.A."/>
        </authorList>
    </citation>
    <scope>DISRUPTION PHENOTYPE</scope>
    <scope>VARIANT 163-LEU--ALA-165 DEL</scope>
</reference>
<reference key="5">
    <citation type="journal article" date="2020" name="Nature">
        <title>MFSD12 mediates the import of cysteine into melanosomes and lysosomes.</title>
        <authorList>
            <person name="Adelmann C.H."/>
            <person name="Traunbauer A.K."/>
            <person name="Chen B."/>
            <person name="Condon K.J."/>
            <person name="Chan S.H."/>
            <person name="Kunchok T."/>
            <person name="Lewis C.A."/>
            <person name="Sabatini D.M."/>
        </authorList>
    </citation>
    <scope>FUNCTION</scope>
</reference>
<feature type="chain" id="PRO_0000274523" description="Major facilitator superfamily domain-containing protein 12">
    <location>
        <begin position="1"/>
        <end position="476"/>
    </location>
</feature>
<feature type="topological domain" description="Cytoplasmic" evidence="6">
    <location>
        <begin position="1"/>
        <end position="25"/>
    </location>
</feature>
<feature type="transmembrane region" description="Helical" evidence="2">
    <location>
        <begin position="26"/>
        <end position="46"/>
    </location>
</feature>
<feature type="topological domain" description="Lumenal" evidence="6">
    <location>
        <begin position="47"/>
        <end position="55"/>
    </location>
</feature>
<feature type="transmembrane region" description="Helical" evidence="2">
    <location>
        <begin position="56"/>
        <end position="76"/>
    </location>
</feature>
<feature type="topological domain" description="Cytoplasmic" evidence="6">
    <location>
        <begin position="77"/>
        <end position="94"/>
    </location>
</feature>
<feature type="transmembrane region" description="Helical" evidence="2">
    <location>
        <begin position="95"/>
        <end position="115"/>
    </location>
</feature>
<feature type="topological domain" description="Lumenal" evidence="6">
    <location>
        <begin position="116"/>
        <end position="121"/>
    </location>
</feature>
<feature type="transmembrane region" description="Helical" evidence="2">
    <location>
        <begin position="122"/>
        <end position="142"/>
    </location>
</feature>
<feature type="topological domain" description="Cytoplasmic" evidence="6">
    <location>
        <begin position="143"/>
        <end position="167"/>
    </location>
</feature>
<feature type="transmembrane region" description="Helical" evidence="2">
    <location>
        <begin position="168"/>
        <end position="188"/>
    </location>
</feature>
<feature type="topological domain" description="Lumenal" evidence="6">
    <location>
        <begin position="189"/>
        <end position="213"/>
    </location>
</feature>
<feature type="transmembrane region" description="Helical" evidence="2">
    <location>
        <begin position="214"/>
        <end position="234"/>
    </location>
</feature>
<feature type="topological domain" description="Cytoplasmic" evidence="6">
    <location>
        <begin position="235"/>
        <end position="284"/>
    </location>
</feature>
<feature type="transmembrane region" description="Helical" evidence="2">
    <location>
        <begin position="285"/>
        <end position="305"/>
    </location>
</feature>
<feature type="topological domain" description="Lumenal" evidence="6">
    <location>
        <position position="306"/>
    </location>
</feature>
<feature type="transmembrane region" description="Helical" evidence="2">
    <location>
        <begin position="307"/>
        <end position="327"/>
    </location>
</feature>
<feature type="topological domain" description="Cytoplasmic" evidence="6">
    <location>
        <begin position="328"/>
        <end position="343"/>
    </location>
</feature>
<feature type="transmembrane region" description="Helical" evidence="2">
    <location>
        <begin position="344"/>
        <end position="364"/>
    </location>
</feature>
<feature type="transmembrane region" description="Helical" evidence="2">
    <location>
        <begin position="365"/>
        <end position="385"/>
    </location>
</feature>
<feature type="topological domain" description="Cytoplasmic" evidence="6">
    <location>
        <begin position="386"/>
        <end position="398"/>
    </location>
</feature>
<feature type="transmembrane region" description="Helical" evidence="2">
    <location>
        <begin position="399"/>
        <end position="419"/>
    </location>
</feature>
<feature type="topological domain" description="Lumenal" evidence="6">
    <location>
        <begin position="420"/>
        <end position="444"/>
    </location>
</feature>
<feature type="transmembrane region" description="Helical" evidence="2">
    <location>
        <begin position="445"/>
        <end position="465"/>
    </location>
</feature>
<feature type="topological domain" description="Cytoplasmic" evidence="6">
    <location>
        <begin position="466"/>
        <end position="476"/>
    </location>
</feature>
<feature type="modified residue" description="N-acetylmethionine" evidence="1">
    <location>
        <position position="1"/>
    </location>
</feature>
<feature type="modified residue" description="Phosphothreonine" evidence="1">
    <location>
        <position position="251"/>
    </location>
</feature>
<feature type="sequence variant" description="In grizzled (gr), mice show a uniformly gray coat color, rather than the expected agouti coat color." evidence="3">
    <location>
        <begin position="163"/>
        <end position="165"/>
    </location>
</feature>
<feature type="sequence conflict" description="In Ref. 1; BAE32913." evidence="6" ref="1">
    <original>V</original>
    <variation>A</variation>
    <location>
        <position position="400"/>
    </location>
</feature>
<keyword id="KW-0007">Acetylation</keyword>
<keyword id="KW-0029">Amino-acid transport</keyword>
<keyword id="KW-0458">Lysosome</keyword>
<keyword id="KW-0470">Melanin biosynthesis</keyword>
<keyword id="KW-0472">Membrane</keyword>
<keyword id="KW-0597">Phosphoprotein</keyword>
<keyword id="KW-1185">Reference proteome</keyword>
<keyword id="KW-0812">Transmembrane</keyword>
<keyword id="KW-1133">Transmembrane helix</keyword>
<keyword id="KW-0813">Transport</keyword>
<organism>
    <name type="scientific">Mus musculus</name>
    <name type="common">Mouse</name>
    <dbReference type="NCBI Taxonomy" id="10090"/>
    <lineage>
        <taxon>Eukaryota</taxon>
        <taxon>Metazoa</taxon>
        <taxon>Chordata</taxon>
        <taxon>Craniata</taxon>
        <taxon>Vertebrata</taxon>
        <taxon>Euteleostomi</taxon>
        <taxon>Mammalia</taxon>
        <taxon>Eutheria</taxon>
        <taxon>Euarchontoglires</taxon>
        <taxon>Glires</taxon>
        <taxon>Rodentia</taxon>
        <taxon>Myomorpha</taxon>
        <taxon>Muroidea</taxon>
        <taxon>Muridae</taxon>
        <taxon>Murinae</taxon>
        <taxon>Mus</taxon>
        <taxon>Mus</taxon>
    </lineage>
</organism>
<dbReference type="EMBL" id="AK149678">
    <property type="protein sequence ID" value="BAE29021.1"/>
    <property type="molecule type" value="mRNA"/>
</dbReference>
<dbReference type="EMBL" id="AK154386">
    <property type="protein sequence ID" value="BAE32552.1"/>
    <property type="molecule type" value="mRNA"/>
</dbReference>
<dbReference type="EMBL" id="AK154902">
    <property type="protein sequence ID" value="BAE32913.1"/>
    <property type="molecule type" value="mRNA"/>
</dbReference>
<dbReference type="EMBL" id="AK171084">
    <property type="protein sequence ID" value="BAE42237.1"/>
    <property type="molecule type" value="mRNA"/>
</dbReference>
<dbReference type="EMBL" id="BC118620">
    <property type="protein sequence ID" value="AAI18621.1"/>
    <property type="molecule type" value="mRNA"/>
</dbReference>
<dbReference type="EMBL" id="BC119790">
    <property type="protein sequence ID" value="AAI19791.1"/>
    <property type="molecule type" value="mRNA"/>
</dbReference>
<dbReference type="CCDS" id="CCDS35996.1"/>
<dbReference type="RefSeq" id="NP_082933.2">
    <property type="nucleotide sequence ID" value="NM_028657.4"/>
</dbReference>
<dbReference type="SMR" id="Q3U481"/>
<dbReference type="FunCoup" id="Q3U481">
    <property type="interactions" value="473"/>
</dbReference>
<dbReference type="STRING" id="10090.ENSMUSP00000036116"/>
<dbReference type="iPTMnet" id="Q3U481"/>
<dbReference type="PhosphoSitePlus" id="Q3U481"/>
<dbReference type="PaxDb" id="10090-ENSMUSP00000036116"/>
<dbReference type="ProteomicsDB" id="292313"/>
<dbReference type="Pumba" id="Q3U481"/>
<dbReference type="Antibodypedia" id="23242">
    <property type="antibodies" value="63 antibodies from 17 providers"/>
</dbReference>
<dbReference type="DNASU" id="73822"/>
<dbReference type="Ensembl" id="ENSMUST00000044844.9">
    <property type="protein sequence ID" value="ENSMUSP00000036116.9"/>
    <property type="gene ID" value="ENSMUSG00000034854.9"/>
</dbReference>
<dbReference type="GeneID" id="73822"/>
<dbReference type="KEGG" id="mmu:73822"/>
<dbReference type="UCSC" id="uc007gho.1">
    <property type="organism name" value="mouse"/>
</dbReference>
<dbReference type="AGR" id="MGI:3604804"/>
<dbReference type="CTD" id="126321"/>
<dbReference type="MGI" id="MGI:3604804">
    <property type="gene designation" value="Mfsd12"/>
</dbReference>
<dbReference type="VEuPathDB" id="HostDB:ENSMUSG00000034854"/>
<dbReference type="eggNOG" id="KOG4830">
    <property type="taxonomic scope" value="Eukaryota"/>
</dbReference>
<dbReference type="GeneTree" id="ENSGT00390000005318"/>
<dbReference type="HOGENOM" id="CLU_030068_1_0_1"/>
<dbReference type="InParanoid" id="Q3U481"/>
<dbReference type="OMA" id="GLYTAWM"/>
<dbReference type="OrthoDB" id="1730117at2759"/>
<dbReference type="PhylomeDB" id="Q3U481"/>
<dbReference type="TreeFam" id="TF314080"/>
<dbReference type="BioGRID-ORCS" id="73822">
    <property type="hits" value="4 hits in 79 CRISPR screens"/>
</dbReference>
<dbReference type="ChiTaRS" id="Mfsd12">
    <property type="organism name" value="mouse"/>
</dbReference>
<dbReference type="PRO" id="PR:Q3U481"/>
<dbReference type="Proteomes" id="UP000000589">
    <property type="component" value="Chromosome 10"/>
</dbReference>
<dbReference type="RNAct" id="Q3U481">
    <property type="molecule type" value="protein"/>
</dbReference>
<dbReference type="Bgee" id="ENSMUSG00000034854">
    <property type="expression patterns" value="Expressed in epithelium of small intestine and 211 other cell types or tissues"/>
</dbReference>
<dbReference type="ExpressionAtlas" id="Q3U481">
    <property type="expression patterns" value="baseline and differential"/>
</dbReference>
<dbReference type="GO" id="GO:0005770">
    <property type="term" value="C:late endosome"/>
    <property type="evidence" value="ECO:0007669"/>
    <property type="project" value="Ensembl"/>
</dbReference>
<dbReference type="GO" id="GO:0005765">
    <property type="term" value="C:lysosomal membrane"/>
    <property type="evidence" value="ECO:0007669"/>
    <property type="project" value="UniProtKB-SubCell"/>
</dbReference>
<dbReference type="GO" id="GO:0005764">
    <property type="term" value="C:lysosome"/>
    <property type="evidence" value="ECO:0000250"/>
    <property type="project" value="UniProtKB"/>
</dbReference>
<dbReference type="GO" id="GO:0033162">
    <property type="term" value="C:melanosome membrane"/>
    <property type="evidence" value="ECO:0007669"/>
    <property type="project" value="UniProtKB-SubCell"/>
</dbReference>
<dbReference type="GO" id="GO:0033229">
    <property type="term" value="F:cysteine transmembrane transporter activity"/>
    <property type="evidence" value="ECO:0000250"/>
    <property type="project" value="UniProtKB"/>
</dbReference>
<dbReference type="GO" id="GO:0015293">
    <property type="term" value="F:symporter activity"/>
    <property type="evidence" value="ECO:0007669"/>
    <property type="project" value="InterPro"/>
</dbReference>
<dbReference type="GO" id="GO:0008643">
    <property type="term" value="P:carbohydrate transport"/>
    <property type="evidence" value="ECO:0007669"/>
    <property type="project" value="InterPro"/>
</dbReference>
<dbReference type="GO" id="GO:1903712">
    <property type="term" value="P:cysteine transmembrane transport"/>
    <property type="evidence" value="ECO:0000250"/>
    <property type="project" value="UniProtKB"/>
</dbReference>
<dbReference type="GO" id="GO:0042438">
    <property type="term" value="P:melanin biosynthetic process"/>
    <property type="evidence" value="ECO:0007669"/>
    <property type="project" value="UniProtKB-KW"/>
</dbReference>
<dbReference type="GO" id="GO:0048022">
    <property type="term" value="P:negative regulation of melanin biosynthetic process"/>
    <property type="evidence" value="ECO:0000315"/>
    <property type="project" value="CACAO"/>
</dbReference>
<dbReference type="GO" id="GO:0043474">
    <property type="term" value="P:pigment metabolic process involved in pigmentation"/>
    <property type="evidence" value="ECO:0000315"/>
    <property type="project" value="UniProtKB"/>
</dbReference>
<dbReference type="GO" id="GO:0048021">
    <property type="term" value="P:regulation of melanin biosynthetic process"/>
    <property type="evidence" value="ECO:0000315"/>
    <property type="project" value="UniProtKB"/>
</dbReference>
<dbReference type="CDD" id="cd17491">
    <property type="entry name" value="MFS_MFSD12"/>
    <property type="match status" value="1"/>
</dbReference>
<dbReference type="FunFam" id="1.20.1250.20:FF:000206">
    <property type="entry name" value="Major facilitator superfamily domain containing 12"/>
    <property type="match status" value="1"/>
</dbReference>
<dbReference type="FunFam" id="1.20.1250.20:FF:000219">
    <property type="entry name" value="major facilitator superfamily domain-containing protein 12 isoform X3"/>
    <property type="match status" value="1"/>
</dbReference>
<dbReference type="Gene3D" id="1.20.1250.20">
    <property type="entry name" value="MFS general substrate transporter like domains"/>
    <property type="match status" value="2"/>
</dbReference>
<dbReference type="InterPro" id="IPR039672">
    <property type="entry name" value="MFS_2"/>
</dbReference>
<dbReference type="InterPro" id="IPR036259">
    <property type="entry name" value="MFS_trans_sf"/>
</dbReference>
<dbReference type="PANTHER" id="PTHR11328">
    <property type="entry name" value="MAJOR FACILITATOR SUPERFAMILY DOMAIN-CONTAINING PROTEIN"/>
    <property type="match status" value="1"/>
</dbReference>
<dbReference type="PANTHER" id="PTHR11328:SF28">
    <property type="entry name" value="MAJOR FACILITATOR SUPERFAMILY DOMAIN-CONTAINING PROTEIN 12"/>
    <property type="match status" value="1"/>
</dbReference>
<dbReference type="Pfam" id="PF13347">
    <property type="entry name" value="MFS_2"/>
    <property type="match status" value="1"/>
</dbReference>
<dbReference type="SUPFAM" id="SSF103473">
    <property type="entry name" value="MFS general substrate transporter"/>
    <property type="match status" value="1"/>
</dbReference>
<evidence type="ECO:0000250" key="1">
    <source>
        <dbReference type="UniProtKB" id="Q6NUT3"/>
    </source>
</evidence>
<evidence type="ECO:0000255" key="2"/>
<evidence type="ECO:0000269" key="3">
    <source>
    </source>
</evidence>
<evidence type="ECO:0000269" key="4">
    <source>
    </source>
</evidence>
<evidence type="ECO:0000303" key="5">
    <source>
    </source>
</evidence>
<evidence type="ECO:0000305" key="6"/>
<evidence type="ECO:0000312" key="7">
    <source>
        <dbReference type="MGI" id="MGI:3604804"/>
    </source>
</evidence>
<sequence>MSPPSDDAGPGPPRTLSLAARLSFAVGHFLNDLCAGMWFTYLLLFLHSVRGYSSRGAGLLLLLGQVADGLCTPLVGYEADRASCVRCGPRKAWHLAGTVCVLLSFPFIFSPCLGCGEATPEWAALLYYGPFIVVFQFGWAATQIAHLSLIPELVTSDHEKVELTALRYAFTVVANITVYGAAWLLLHLQGSAHGEQDISVGDQLGVQDVPVFRNLALLVVGVGAIFSLLFHLGTKEGHRSQHWGNEPNEHTPLVAPAAQPLLLWKHWLREPAFYQVGMLYMTTRLIVNLSQTYIAMYLTYSLSLPKKFIATIPLVMYLSGFFSSFLMKPVNRRIGRNMTYFTGLLVILAFAAWVALADNLGVAVYGAAVLLGAGCATILVTSLAMTADLIGPHTHSGAFVYGAMSFSDKVANGLAVMAVQSLHPCPSELCCGACISFYHWVMTAVTGGVGVAAALALCSLLIWPIRIRNRDPRDRP</sequence>
<comment type="function">
    <text evidence="1 4">Transporter that mediates the import of cysteine into melanosomes, thereby regulating skin/hair pigmentation (PubMed:33208952). In melanosomes, cysteine import is required both for normal levels of cystine, the oxidized dimer of cysteine, and provide cysteine for the production of the cysteinyldopas used in pheomelanin synthesis, thereby regulating skin/hair pigmentation (PubMed:33208952). Also catalyzes import of cysteine into lysosomes in non-pigmented cells, regulating lysosomal cystine and cysteine storage, which is essnetial for redox homeostasis (By similarity).</text>
</comment>
<comment type="catalytic activity">
    <reaction evidence="1">
        <text>L-cysteine(in) = L-cysteine(out)</text>
        <dbReference type="Rhea" id="RHEA:29655"/>
        <dbReference type="ChEBI" id="CHEBI:35235"/>
    </reaction>
    <physiologicalReaction direction="left-to-right" evidence="1">
        <dbReference type="Rhea" id="RHEA:29656"/>
    </physiologicalReaction>
</comment>
<comment type="subcellular location">
    <subcellularLocation>
        <location evidence="1">Melanosome membrane</location>
        <topology evidence="2">Multi-pass membrane protein</topology>
    </subcellularLocation>
    <subcellularLocation>
        <location evidence="1">Lysosome membrane</location>
        <topology evidence="2">Multi-pass membrane protein</topology>
    </subcellularLocation>
</comment>
<comment type="PTM">
    <text evidence="1">Phosphorylation at Thr-251 by MTOR via mTORC1 pathway promotes cysteine transport in lysosomes, thereby regulating lysosomal cysteine and cystine storage and redox homeostasis.</text>
</comment>
<comment type="disruption phenotype">
    <text evidence="3">Mice are darker and display a uniformly gray coat color, rather than the expected agouti coat color (PubMed:29025994). Coat color change is caused by a lack of pheomelanin, resulting in white, rather than yellow, banding of hairs (PubMed:29025994).</text>
</comment>
<comment type="similarity">
    <text evidence="6">Belongs to the major facilitator superfamily.</text>
</comment>
<gene>
    <name evidence="7" type="primary">Mfsd12</name>
</gene>
<accession>Q3U481</accession>
<accession>Q3U376</accession>
<proteinExistence type="evidence at protein level"/>
<protein>
    <recommendedName>
        <fullName evidence="6">Major facilitator superfamily domain-containing protein 12</fullName>
    </recommendedName>
    <alternativeName>
        <fullName evidence="5">Protein grizzled</fullName>
    </alternativeName>
</protein>